<dbReference type="EMBL" id="CP000394">
    <property type="protein sequence ID" value="ABI62439.1"/>
    <property type="molecule type" value="Genomic_DNA"/>
</dbReference>
<dbReference type="SMR" id="Q0BRW3"/>
<dbReference type="STRING" id="391165.GbCGDNIH1_1541"/>
<dbReference type="KEGG" id="gbe:GbCGDNIH1_1541"/>
<dbReference type="eggNOG" id="COG0239">
    <property type="taxonomic scope" value="Bacteria"/>
</dbReference>
<dbReference type="HOGENOM" id="CLU_114342_3_0_5"/>
<dbReference type="OrthoDB" id="9806299at2"/>
<dbReference type="Proteomes" id="UP000001963">
    <property type="component" value="Chromosome"/>
</dbReference>
<dbReference type="GO" id="GO:0005886">
    <property type="term" value="C:plasma membrane"/>
    <property type="evidence" value="ECO:0007669"/>
    <property type="project" value="UniProtKB-SubCell"/>
</dbReference>
<dbReference type="GO" id="GO:0062054">
    <property type="term" value="F:fluoride channel activity"/>
    <property type="evidence" value="ECO:0007669"/>
    <property type="project" value="UniProtKB-UniRule"/>
</dbReference>
<dbReference type="GO" id="GO:0046872">
    <property type="term" value="F:metal ion binding"/>
    <property type="evidence" value="ECO:0007669"/>
    <property type="project" value="UniProtKB-KW"/>
</dbReference>
<dbReference type="GO" id="GO:0140114">
    <property type="term" value="P:cellular detoxification of fluoride"/>
    <property type="evidence" value="ECO:0007669"/>
    <property type="project" value="UniProtKB-UniRule"/>
</dbReference>
<dbReference type="HAMAP" id="MF_00454">
    <property type="entry name" value="FluC"/>
    <property type="match status" value="1"/>
</dbReference>
<dbReference type="InterPro" id="IPR003691">
    <property type="entry name" value="FluC"/>
</dbReference>
<dbReference type="NCBIfam" id="TIGR00494">
    <property type="entry name" value="crcB"/>
    <property type="match status" value="1"/>
</dbReference>
<dbReference type="NCBIfam" id="NF010791">
    <property type="entry name" value="PRK14195.1"/>
    <property type="match status" value="1"/>
</dbReference>
<dbReference type="NCBIfam" id="NF010794">
    <property type="entry name" value="PRK14198.1"/>
    <property type="match status" value="1"/>
</dbReference>
<dbReference type="PANTHER" id="PTHR28259">
    <property type="entry name" value="FLUORIDE EXPORT PROTEIN 1-RELATED"/>
    <property type="match status" value="1"/>
</dbReference>
<dbReference type="PANTHER" id="PTHR28259:SF1">
    <property type="entry name" value="FLUORIDE EXPORT PROTEIN 1-RELATED"/>
    <property type="match status" value="1"/>
</dbReference>
<dbReference type="Pfam" id="PF02537">
    <property type="entry name" value="CRCB"/>
    <property type="match status" value="1"/>
</dbReference>
<protein>
    <recommendedName>
        <fullName evidence="1">Fluoride-specific ion channel FluC</fullName>
    </recommendedName>
</protein>
<reference key="1">
    <citation type="journal article" date="2007" name="J. Bacteriol.">
        <title>Genome sequence analysis of the emerging human pathogenic acetic acid bacterium Granulibacter bethesdensis.</title>
        <authorList>
            <person name="Greenberg D.E."/>
            <person name="Porcella S.F."/>
            <person name="Zelazny A.M."/>
            <person name="Virtaneva K."/>
            <person name="Sturdevant D.E."/>
            <person name="Kupko J.J. III"/>
            <person name="Barbian K.D."/>
            <person name="Babar A."/>
            <person name="Dorward D.W."/>
            <person name="Holland S.M."/>
        </authorList>
    </citation>
    <scope>NUCLEOTIDE SEQUENCE [LARGE SCALE GENOMIC DNA]</scope>
    <source>
        <strain>ATCC BAA-1260 / CGDNIH1</strain>
    </source>
</reference>
<evidence type="ECO:0000255" key="1">
    <source>
        <dbReference type="HAMAP-Rule" id="MF_00454"/>
    </source>
</evidence>
<sequence length="127" mass="13766">MMSYLIVFFGAGIGGMARHMVNLTAMRWGLTEFPFGTLFINMLGSFLIGAVVETFALKAGLPQHWRLFLTTGILGGFTTFSAFSLETVLLYERGKVFLAASYAVASVTLSVGALLLALHLVRTLIRG</sequence>
<organism>
    <name type="scientific">Granulibacter bethesdensis (strain ATCC BAA-1260 / CGDNIH1)</name>
    <dbReference type="NCBI Taxonomy" id="391165"/>
    <lineage>
        <taxon>Bacteria</taxon>
        <taxon>Pseudomonadati</taxon>
        <taxon>Pseudomonadota</taxon>
        <taxon>Alphaproteobacteria</taxon>
        <taxon>Acetobacterales</taxon>
        <taxon>Acetobacteraceae</taxon>
        <taxon>Granulibacter</taxon>
    </lineage>
</organism>
<name>FLUC_GRABC</name>
<keyword id="KW-0997">Cell inner membrane</keyword>
<keyword id="KW-1003">Cell membrane</keyword>
<keyword id="KW-0407">Ion channel</keyword>
<keyword id="KW-0406">Ion transport</keyword>
<keyword id="KW-0472">Membrane</keyword>
<keyword id="KW-0479">Metal-binding</keyword>
<keyword id="KW-1185">Reference proteome</keyword>
<keyword id="KW-0915">Sodium</keyword>
<keyword id="KW-0812">Transmembrane</keyword>
<keyword id="KW-1133">Transmembrane helix</keyword>
<keyword id="KW-0813">Transport</keyword>
<gene>
    <name evidence="1" type="primary">fluC</name>
    <name evidence="1" type="synonym">crcB</name>
    <name type="ordered locus">GbCGDNIH1_1541</name>
</gene>
<proteinExistence type="inferred from homology"/>
<comment type="function">
    <text evidence="1">Fluoride-specific ion channel. Important for reducing fluoride concentration in the cell, thus reducing its toxicity.</text>
</comment>
<comment type="catalytic activity">
    <reaction evidence="1">
        <text>fluoride(in) = fluoride(out)</text>
        <dbReference type="Rhea" id="RHEA:76159"/>
        <dbReference type="ChEBI" id="CHEBI:17051"/>
    </reaction>
    <physiologicalReaction direction="left-to-right" evidence="1">
        <dbReference type="Rhea" id="RHEA:76160"/>
    </physiologicalReaction>
</comment>
<comment type="activity regulation">
    <text evidence="1">Na(+) is not transported, but it plays an essential structural role and its presence is essential for fluoride channel function.</text>
</comment>
<comment type="subcellular location">
    <subcellularLocation>
        <location evidence="1">Cell inner membrane</location>
        <topology evidence="1">Multi-pass membrane protein</topology>
    </subcellularLocation>
</comment>
<comment type="similarity">
    <text evidence="1">Belongs to the fluoride channel Fluc/FEX (TC 1.A.43) family.</text>
</comment>
<feature type="chain" id="PRO_1000026390" description="Fluoride-specific ion channel FluC">
    <location>
        <begin position="1"/>
        <end position="127"/>
    </location>
</feature>
<feature type="transmembrane region" description="Helical" evidence="1">
    <location>
        <begin position="1"/>
        <end position="21"/>
    </location>
</feature>
<feature type="transmembrane region" description="Helical" evidence="1">
    <location>
        <begin position="32"/>
        <end position="52"/>
    </location>
</feature>
<feature type="transmembrane region" description="Helical" evidence="1">
    <location>
        <begin position="71"/>
        <end position="91"/>
    </location>
</feature>
<feature type="transmembrane region" description="Helical" evidence="1">
    <location>
        <begin position="96"/>
        <end position="116"/>
    </location>
</feature>
<feature type="binding site" evidence="1">
    <location>
        <position position="75"/>
    </location>
    <ligand>
        <name>Na(+)</name>
        <dbReference type="ChEBI" id="CHEBI:29101"/>
        <note>structural</note>
    </ligand>
</feature>
<feature type="binding site" evidence="1">
    <location>
        <position position="78"/>
    </location>
    <ligand>
        <name>Na(+)</name>
        <dbReference type="ChEBI" id="CHEBI:29101"/>
        <note>structural</note>
    </ligand>
</feature>
<accession>Q0BRW3</accession>